<organism>
    <name type="scientific">Pseudarthrobacter chlorophenolicus (strain ATCC 700700 / DSM 12829 / CIP 107037 / JCM 12360 / KCTC 9906 / NCIMB 13794 / A6)</name>
    <name type="common">Arthrobacter chlorophenolicus</name>
    <dbReference type="NCBI Taxonomy" id="452863"/>
    <lineage>
        <taxon>Bacteria</taxon>
        <taxon>Bacillati</taxon>
        <taxon>Actinomycetota</taxon>
        <taxon>Actinomycetes</taxon>
        <taxon>Micrococcales</taxon>
        <taxon>Micrococcaceae</taxon>
        <taxon>Pseudarthrobacter</taxon>
    </lineage>
</organism>
<keyword id="KW-0028">Amino-acid biosynthesis</keyword>
<keyword id="KW-0067">ATP-binding</keyword>
<keyword id="KW-0963">Cytoplasm</keyword>
<keyword id="KW-0328">Glycosyltransferase</keyword>
<keyword id="KW-0368">Histidine biosynthesis</keyword>
<keyword id="KW-0460">Magnesium</keyword>
<keyword id="KW-0479">Metal-binding</keyword>
<keyword id="KW-0547">Nucleotide-binding</keyword>
<keyword id="KW-0808">Transferase</keyword>
<sequence>MLRVAVPNKGSLSEAASAMLSEAGYRQRRDSRELVMVDPDNDIEFFFLRPRDIAVYVGRGTLDVGITGRDLLLDAEVEAEELLPLGFAASTFRFAGPVGDFASAEELEGKRLATSYDGLLRGYLAERGINAKVVRLDGAVESSVRLGVADAIADVVETGNTLKAAGMEIFGDPILKSEAVLIRRAGGTTNGTAKEVDVLIRRLQGVLVARQYVLMDYDIRKELVEKAAALTPGLESPTVSPLRDSDWVAVRSMVPKKETNRIMDELYDLGARAILVSSIHACRI</sequence>
<comment type="function">
    <text evidence="1">Catalyzes the condensation of ATP and 5-phosphoribose 1-diphosphate to form N'-(5'-phosphoribosyl)-ATP (PR-ATP). Has a crucial role in the pathway because the rate of histidine biosynthesis seems to be controlled primarily by regulation of HisG enzymatic activity.</text>
</comment>
<comment type="catalytic activity">
    <reaction evidence="1">
        <text>1-(5-phospho-beta-D-ribosyl)-ATP + diphosphate = 5-phospho-alpha-D-ribose 1-diphosphate + ATP</text>
        <dbReference type="Rhea" id="RHEA:18473"/>
        <dbReference type="ChEBI" id="CHEBI:30616"/>
        <dbReference type="ChEBI" id="CHEBI:33019"/>
        <dbReference type="ChEBI" id="CHEBI:58017"/>
        <dbReference type="ChEBI" id="CHEBI:73183"/>
        <dbReference type="EC" id="2.4.2.17"/>
    </reaction>
</comment>
<comment type="cofactor">
    <cofactor evidence="1">
        <name>Mg(2+)</name>
        <dbReference type="ChEBI" id="CHEBI:18420"/>
    </cofactor>
</comment>
<comment type="activity regulation">
    <text evidence="1">Feedback inhibited by histidine.</text>
</comment>
<comment type="pathway">
    <text evidence="1">Amino-acid biosynthesis; L-histidine biosynthesis; L-histidine from 5-phospho-alpha-D-ribose 1-diphosphate: step 1/9.</text>
</comment>
<comment type="subcellular location">
    <subcellularLocation>
        <location evidence="1">Cytoplasm</location>
    </subcellularLocation>
</comment>
<comment type="similarity">
    <text evidence="1">Belongs to the ATP phosphoribosyltransferase family. Long subfamily.</text>
</comment>
<proteinExistence type="inferred from homology"/>
<name>HIS1_PSECP</name>
<reference key="1">
    <citation type="submission" date="2009-01" db="EMBL/GenBank/DDBJ databases">
        <title>Complete sequence of chromosome of Arthrobacter chlorophenolicus A6.</title>
        <authorList>
            <consortium name="US DOE Joint Genome Institute"/>
            <person name="Lucas S."/>
            <person name="Copeland A."/>
            <person name="Lapidus A."/>
            <person name="Glavina del Rio T."/>
            <person name="Tice H."/>
            <person name="Bruce D."/>
            <person name="Goodwin L."/>
            <person name="Pitluck S."/>
            <person name="Goltsman E."/>
            <person name="Clum A."/>
            <person name="Larimer F."/>
            <person name="Land M."/>
            <person name="Hauser L."/>
            <person name="Kyrpides N."/>
            <person name="Mikhailova N."/>
            <person name="Jansson J."/>
            <person name="Richardson P."/>
        </authorList>
    </citation>
    <scope>NUCLEOTIDE SEQUENCE [LARGE SCALE GENOMIC DNA]</scope>
    <source>
        <strain>ATCC 700700 / DSM 12829 / CIP 107037 / JCM 12360 / KCTC 9906 / NCIMB 13794 / A6</strain>
    </source>
</reference>
<feature type="chain" id="PRO_1000190545" description="ATP phosphoribosyltransferase">
    <location>
        <begin position="1"/>
        <end position="284"/>
    </location>
</feature>
<protein>
    <recommendedName>
        <fullName evidence="1">ATP phosphoribosyltransferase</fullName>
        <shortName evidence="1">ATP-PRT</shortName>
        <shortName evidence="1">ATP-PRTase</shortName>
        <ecNumber evidence="1">2.4.2.17</ecNumber>
    </recommendedName>
</protein>
<accession>B8H6U1</accession>
<dbReference type="EC" id="2.4.2.17" evidence="1"/>
<dbReference type="EMBL" id="CP001341">
    <property type="protein sequence ID" value="ACL39662.1"/>
    <property type="molecule type" value="Genomic_DNA"/>
</dbReference>
<dbReference type="RefSeq" id="WP_015936882.1">
    <property type="nucleotide sequence ID" value="NC_011886.1"/>
</dbReference>
<dbReference type="SMR" id="B8H6U1"/>
<dbReference type="STRING" id="452863.Achl_1675"/>
<dbReference type="KEGG" id="ach:Achl_1675"/>
<dbReference type="eggNOG" id="COG0040">
    <property type="taxonomic scope" value="Bacteria"/>
</dbReference>
<dbReference type="HOGENOM" id="CLU_038115_1_1_11"/>
<dbReference type="OrthoDB" id="9801867at2"/>
<dbReference type="UniPathway" id="UPA00031">
    <property type="reaction ID" value="UER00006"/>
</dbReference>
<dbReference type="Proteomes" id="UP000002505">
    <property type="component" value="Chromosome"/>
</dbReference>
<dbReference type="GO" id="GO:0005737">
    <property type="term" value="C:cytoplasm"/>
    <property type="evidence" value="ECO:0007669"/>
    <property type="project" value="UniProtKB-SubCell"/>
</dbReference>
<dbReference type="GO" id="GO:0005524">
    <property type="term" value="F:ATP binding"/>
    <property type="evidence" value="ECO:0007669"/>
    <property type="project" value="UniProtKB-KW"/>
</dbReference>
<dbReference type="GO" id="GO:0003879">
    <property type="term" value="F:ATP phosphoribosyltransferase activity"/>
    <property type="evidence" value="ECO:0007669"/>
    <property type="project" value="UniProtKB-UniRule"/>
</dbReference>
<dbReference type="GO" id="GO:0000287">
    <property type="term" value="F:magnesium ion binding"/>
    <property type="evidence" value="ECO:0007669"/>
    <property type="project" value="UniProtKB-UniRule"/>
</dbReference>
<dbReference type="GO" id="GO:0000105">
    <property type="term" value="P:L-histidine biosynthetic process"/>
    <property type="evidence" value="ECO:0007669"/>
    <property type="project" value="UniProtKB-UniRule"/>
</dbReference>
<dbReference type="CDD" id="cd13591">
    <property type="entry name" value="PBP2_HisGL1"/>
    <property type="match status" value="1"/>
</dbReference>
<dbReference type="FunFam" id="3.30.70.120:FF:000003">
    <property type="entry name" value="ATP phosphoribosyltransferase"/>
    <property type="match status" value="1"/>
</dbReference>
<dbReference type="Gene3D" id="3.30.70.120">
    <property type="match status" value="1"/>
</dbReference>
<dbReference type="Gene3D" id="3.40.190.10">
    <property type="entry name" value="Periplasmic binding protein-like II"/>
    <property type="match status" value="2"/>
</dbReference>
<dbReference type="HAMAP" id="MF_00079">
    <property type="entry name" value="HisG_Long"/>
    <property type="match status" value="1"/>
</dbReference>
<dbReference type="InterPro" id="IPR020621">
    <property type="entry name" value="ATP-PRT_HisG_long"/>
</dbReference>
<dbReference type="InterPro" id="IPR013820">
    <property type="entry name" value="ATP_PRibTrfase_cat"/>
</dbReference>
<dbReference type="InterPro" id="IPR018198">
    <property type="entry name" value="ATP_PRibTrfase_CS"/>
</dbReference>
<dbReference type="InterPro" id="IPR001348">
    <property type="entry name" value="ATP_PRibTrfase_HisG"/>
</dbReference>
<dbReference type="InterPro" id="IPR013115">
    <property type="entry name" value="HisG_C"/>
</dbReference>
<dbReference type="InterPro" id="IPR011322">
    <property type="entry name" value="N-reg_PII-like_a/b"/>
</dbReference>
<dbReference type="InterPro" id="IPR015867">
    <property type="entry name" value="N-reg_PII/ATP_PRibTrfase_C"/>
</dbReference>
<dbReference type="NCBIfam" id="TIGR00070">
    <property type="entry name" value="hisG"/>
    <property type="match status" value="1"/>
</dbReference>
<dbReference type="NCBIfam" id="TIGR03455">
    <property type="entry name" value="HisG_C-term"/>
    <property type="match status" value="1"/>
</dbReference>
<dbReference type="PANTHER" id="PTHR21403:SF8">
    <property type="entry name" value="ATP PHOSPHORIBOSYLTRANSFERASE"/>
    <property type="match status" value="1"/>
</dbReference>
<dbReference type="PANTHER" id="PTHR21403">
    <property type="entry name" value="ATP PHOSPHORIBOSYLTRANSFERASE ATP-PRTASE"/>
    <property type="match status" value="1"/>
</dbReference>
<dbReference type="Pfam" id="PF01634">
    <property type="entry name" value="HisG"/>
    <property type="match status" value="1"/>
</dbReference>
<dbReference type="Pfam" id="PF08029">
    <property type="entry name" value="HisG_C"/>
    <property type="match status" value="1"/>
</dbReference>
<dbReference type="SUPFAM" id="SSF54913">
    <property type="entry name" value="GlnB-like"/>
    <property type="match status" value="1"/>
</dbReference>
<dbReference type="SUPFAM" id="SSF53850">
    <property type="entry name" value="Periplasmic binding protein-like II"/>
    <property type="match status" value="1"/>
</dbReference>
<dbReference type="PROSITE" id="PS01316">
    <property type="entry name" value="ATP_P_PHORIBOSYLTR"/>
    <property type="match status" value="1"/>
</dbReference>
<gene>
    <name evidence="1" type="primary">hisG</name>
    <name type="ordered locus">Achl_1675</name>
</gene>
<evidence type="ECO:0000255" key="1">
    <source>
        <dbReference type="HAMAP-Rule" id="MF_00079"/>
    </source>
</evidence>